<feature type="chain" id="PRO_0000077401" description="COMM domain-containing protein 8">
    <location>
        <begin position="1"/>
        <end position="183"/>
    </location>
</feature>
<feature type="domain" description="COMM" evidence="1">
    <location>
        <begin position="116"/>
        <end position="183"/>
    </location>
</feature>
<feature type="sequence variant" id="VAR_048814" description="In dbSNP:rs35444219.">
    <original>A</original>
    <variation>P</variation>
    <location>
        <position position="17"/>
    </location>
</feature>
<feature type="sequence conflict" description="In Ref. 4; AAH19826." evidence="10" ref="4">
    <original>A</original>
    <variation>L</variation>
    <location>
        <position position="127"/>
    </location>
</feature>
<feature type="helix" evidence="15">
    <location>
        <begin position="8"/>
        <end position="14"/>
    </location>
</feature>
<feature type="helix" evidence="15">
    <location>
        <begin position="17"/>
        <end position="19"/>
    </location>
</feature>
<feature type="helix" evidence="15">
    <location>
        <begin position="20"/>
        <end position="32"/>
    </location>
</feature>
<feature type="helix" evidence="15">
    <location>
        <begin position="39"/>
        <end position="41"/>
    </location>
</feature>
<feature type="turn" evidence="15">
    <location>
        <begin position="42"/>
        <end position="45"/>
    </location>
</feature>
<feature type="helix" evidence="15">
    <location>
        <begin position="48"/>
        <end position="67"/>
    </location>
</feature>
<feature type="helix" evidence="15">
    <location>
        <begin position="72"/>
        <end position="78"/>
    </location>
</feature>
<feature type="turn" evidence="15">
    <location>
        <begin position="79"/>
        <end position="81"/>
    </location>
</feature>
<feature type="helix" evidence="15">
    <location>
        <begin position="84"/>
        <end position="110"/>
    </location>
</feature>
<feature type="strand" evidence="15">
    <location>
        <begin position="112"/>
        <end position="132"/>
    </location>
</feature>
<feature type="strand" evidence="15">
    <location>
        <begin position="138"/>
        <end position="149"/>
    </location>
</feature>
<feature type="strand" evidence="15">
    <location>
        <begin position="152"/>
        <end position="160"/>
    </location>
</feature>
<feature type="helix" evidence="15">
    <location>
        <begin position="162"/>
        <end position="182"/>
    </location>
</feature>
<gene>
    <name type="primary">COMMD8</name>
    <name type="ORF">MDS022</name>
</gene>
<comment type="function">
    <text evidence="2 8 9 11">Scaffold protein in the commander complex that is essential for endosomal recycling of transmembrane cargos; the commander complex is composed of the CCC subcomplex and the retriever subcomplex (PubMed:37172566, PubMed:38459129). May modulate activity of cullin-RING E3 ubiquitin ligase (CRL) complexes (PubMed:21778237). May down-regulate activation of NF-kappa-B (PubMed:15799966).</text>
</comment>
<comment type="subunit">
    <text evidence="2 3 4 5 6 7 8 9">Component of the commander complex consisting of the CCC subcomplex and the retriever subcomplex (PubMed:37172566, PubMed:38459129, PubMed:25355947, PubMed:28892079, PubMed:15799966). Component of the CCC (COMMD/CCDC22/CCDC93) subcomplex consisting of COMMD1, COMMD2, COMMD3, COMMD4, COMMD5, COMMD6, COMMD7, COMMD8, COMMD9, COMMD10, CCDC22 and CCDC93; within the complex forms a heterodimer with COMMD4 (PubMed:37172566, PubMed:38459129, PubMed:15799966, PubMed:23563313, PubMed:25355947, PubMed:28892079). Interacts with RELA, RELB, NFKB1/p105 (PubMed:15799966). Interacts with CCDC22, CCDC93, SCNN1B, CUL1, CUL2, CUL3, CUL4A, CUL4B, CUL5 (PubMed:15799966, PubMed:21778237, PubMed:23563313, PubMed:23637203, PubMed:25355947, PubMed:28892079).</text>
</comment>
<comment type="interaction">
    <interactant intactId="EBI-725694">
        <id>Q9NX08</id>
    </interactant>
    <interactant intactId="EBI-3943153">
        <id>O60826</id>
        <label>CCDC22</label>
    </interactant>
    <organismsDiffer>false</organismsDiffer>
    <experiments>11</experiments>
</comment>
<comment type="interaction">
    <interactant intactId="EBI-725694">
        <id>Q9NX08</id>
    </interactant>
    <interactant intactId="EBI-1104769">
        <id>Q567U6</id>
        <label>CCDC93</label>
    </interactant>
    <organismsDiffer>false</organismsDiffer>
    <experiments>6</experiments>
</comment>
<comment type="interaction">
    <interactant intactId="EBI-725694">
        <id>Q9NX08</id>
    </interactant>
    <interactant intactId="EBI-1550112">
        <id>Q8N668</id>
        <label>COMMD1</label>
    </interactant>
    <organismsDiffer>false</organismsDiffer>
    <experiments>10</experiments>
</comment>
<comment type="interaction">
    <interactant intactId="EBI-725694">
        <id>Q9NX08</id>
    </interactant>
    <interactant intactId="EBI-714979">
        <id>Q9UBI1</id>
        <label>COMMD3</label>
    </interactant>
    <organismsDiffer>false</organismsDiffer>
    <experiments>7</experiments>
</comment>
<comment type="interaction">
    <interactant intactId="EBI-725694">
        <id>Q9NX08</id>
    </interactant>
    <interactant intactId="EBI-1550064">
        <id>Q9H0A8</id>
        <label>COMMD4</label>
    </interactant>
    <organismsDiffer>false</organismsDiffer>
    <experiments>14</experiments>
</comment>
<comment type="interaction">
    <interactant intactId="EBI-725694">
        <id>Q9NX08</id>
    </interactant>
    <interactant intactId="EBI-17269964">
        <id>Q6S9Z5</id>
        <label>ZNF474</label>
    </interactant>
    <organismsDiffer>false</organismsDiffer>
    <experiments>3</experiments>
</comment>
<comment type="subcellular location">
    <subcellularLocation>
        <location evidence="3">Cytoplasm</location>
    </subcellularLocation>
    <subcellularLocation>
        <location evidence="3">Nucleus</location>
    </subcellularLocation>
</comment>
<comment type="tissue specificity">
    <text evidence="2">Widely expressed with highest expression in thyroid.</text>
</comment>
<comment type="similarity">
    <text evidence="10">Belongs to the COMM domain-containing protein 8 family.</text>
</comment>
<comment type="sequence caution" evidence="10">
    <conflict type="frameshift">
        <sequence resource="EMBL-CDS" id="AAG14957"/>
    </conflict>
</comment>
<keyword id="KW-0002">3D-structure</keyword>
<keyword id="KW-0963">Cytoplasm</keyword>
<keyword id="KW-0539">Nucleus</keyword>
<keyword id="KW-1267">Proteomics identification</keyword>
<keyword id="KW-1185">Reference proteome</keyword>
<keyword id="KW-0804">Transcription</keyword>
<keyword id="KW-0805">Transcription regulation</keyword>
<dbReference type="EMBL" id="AY542163">
    <property type="protein sequence ID" value="AAS22245.1"/>
    <property type="molecule type" value="mRNA"/>
</dbReference>
<dbReference type="EMBL" id="AF182421">
    <property type="protein sequence ID" value="AAG14957.1"/>
    <property type="status" value="ALT_FRAME"/>
    <property type="molecule type" value="mRNA"/>
</dbReference>
<dbReference type="EMBL" id="AK000509">
    <property type="protein sequence ID" value="BAA91216.1"/>
    <property type="molecule type" value="mRNA"/>
</dbReference>
<dbReference type="EMBL" id="BC015145">
    <property type="protein sequence ID" value="AAH15145.1"/>
    <property type="molecule type" value="mRNA"/>
</dbReference>
<dbReference type="EMBL" id="BC008371">
    <property type="protein sequence ID" value="AAH08371.1"/>
    <property type="molecule type" value="mRNA"/>
</dbReference>
<dbReference type="EMBL" id="BC019826">
    <property type="protein sequence ID" value="AAH19826.1"/>
    <property type="molecule type" value="mRNA"/>
</dbReference>
<dbReference type="CCDS" id="CCDS3475.1"/>
<dbReference type="RefSeq" id="NP_001316597.1">
    <property type="nucleotide sequence ID" value="NM_001329668.1"/>
</dbReference>
<dbReference type="RefSeq" id="NP_060315.1">
    <property type="nucleotide sequence ID" value="NM_017845.5"/>
</dbReference>
<dbReference type="PDB" id="8F2R">
    <property type="method" value="EM"/>
    <property type="resolution" value="3.12 A"/>
    <property type="chains" value="H=5-183"/>
</dbReference>
<dbReference type="PDB" id="8F2U">
    <property type="method" value="EM"/>
    <property type="resolution" value="3.53 A"/>
    <property type="chains" value="H=1-183"/>
</dbReference>
<dbReference type="PDB" id="8P0W">
    <property type="method" value="EM"/>
    <property type="resolution" value="2.90 A"/>
    <property type="chains" value="H=1-183"/>
</dbReference>
<dbReference type="PDBsum" id="8F2R"/>
<dbReference type="PDBsum" id="8F2U"/>
<dbReference type="PDBsum" id="8P0W"/>
<dbReference type="EMDB" id="EMD-17340"/>
<dbReference type="EMDB" id="EMD-17342"/>
<dbReference type="EMDB" id="EMD-28825"/>
<dbReference type="EMDB" id="EMD-28827"/>
<dbReference type="SMR" id="Q9NX08"/>
<dbReference type="BioGRID" id="120289">
    <property type="interactions" value="70"/>
</dbReference>
<dbReference type="ComplexPortal" id="CPX-2211">
    <property type="entry name" value="Commander complex"/>
</dbReference>
<dbReference type="CORUM" id="Q9NX08"/>
<dbReference type="FunCoup" id="Q9NX08">
    <property type="interactions" value="2518"/>
</dbReference>
<dbReference type="IntAct" id="Q9NX08">
    <property type="interactions" value="59"/>
</dbReference>
<dbReference type="MINT" id="Q9NX08"/>
<dbReference type="STRING" id="9606.ENSP00000370984"/>
<dbReference type="iPTMnet" id="Q9NX08"/>
<dbReference type="MetOSite" id="Q9NX08"/>
<dbReference type="PhosphoSitePlus" id="Q9NX08"/>
<dbReference type="BioMuta" id="COMMD8"/>
<dbReference type="DMDM" id="51316105"/>
<dbReference type="jPOST" id="Q9NX08"/>
<dbReference type="MassIVE" id="Q9NX08"/>
<dbReference type="PaxDb" id="9606-ENSP00000370984"/>
<dbReference type="PeptideAtlas" id="Q9NX08"/>
<dbReference type="ProteomicsDB" id="83019"/>
<dbReference type="Pumba" id="Q9NX08"/>
<dbReference type="TopDownProteomics" id="Q9NX08"/>
<dbReference type="Antibodypedia" id="23755">
    <property type="antibodies" value="87 antibodies from 16 providers"/>
</dbReference>
<dbReference type="DNASU" id="54951"/>
<dbReference type="Ensembl" id="ENST00000381571.6">
    <property type="protein sequence ID" value="ENSP00000370984.4"/>
    <property type="gene ID" value="ENSG00000169019.11"/>
</dbReference>
<dbReference type="GeneID" id="54951"/>
<dbReference type="KEGG" id="hsa:54951"/>
<dbReference type="MANE-Select" id="ENST00000381571.6">
    <property type="protein sequence ID" value="ENSP00000370984.4"/>
    <property type="RefSeq nucleotide sequence ID" value="NM_017845.5"/>
    <property type="RefSeq protein sequence ID" value="NP_060315.1"/>
</dbReference>
<dbReference type="UCSC" id="uc003gxi.4">
    <property type="organism name" value="human"/>
</dbReference>
<dbReference type="AGR" id="HGNC:26036"/>
<dbReference type="CTD" id="54951"/>
<dbReference type="DisGeNET" id="54951"/>
<dbReference type="GeneCards" id="COMMD8"/>
<dbReference type="HGNC" id="HGNC:26036">
    <property type="gene designation" value="COMMD8"/>
</dbReference>
<dbReference type="HPA" id="ENSG00000169019">
    <property type="expression patterns" value="Low tissue specificity"/>
</dbReference>
<dbReference type="MIM" id="616656">
    <property type="type" value="gene"/>
</dbReference>
<dbReference type="neXtProt" id="NX_Q9NX08"/>
<dbReference type="OpenTargets" id="ENSG00000169019"/>
<dbReference type="PharmGKB" id="PA134876825"/>
<dbReference type="VEuPathDB" id="HostDB:ENSG00000169019"/>
<dbReference type="eggNOG" id="ENOG502S00F">
    <property type="taxonomic scope" value="Eukaryota"/>
</dbReference>
<dbReference type="GeneTree" id="ENSGT00390000018121"/>
<dbReference type="HOGENOM" id="CLU_116006_0_0_1"/>
<dbReference type="InParanoid" id="Q9NX08"/>
<dbReference type="OMA" id="KLCHRVV"/>
<dbReference type="OrthoDB" id="17646at2759"/>
<dbReference type="PAN-GO" id="Q9NX08">
    <property type="GO annotations" value="0 GO annotations based on evolutionary models"/>
</dbReference>
<dbReference type="PhylomeDB" id="Q9NX08"/>
<dbReference type="TreeFam" id="TF328403"/>
<dbReference type="PathwayCommons" id="Q9NX08"/>
<dbReference type="Reactome" id="R-HSA-8951664">
    <property type="pathway name" value="Neddylation"/>
</dbReference>
<dbReference type="SignaLink" id="Q9NX08"/>
<dbReference type="BioGRID-ORCS" id="54951">
    <property type="hits" value="52 hits in 1125 CRISPR screens"/>
</dbReference>
<dbReference type="ChiTaRS" id="COMMD8">
    <property type="organism name" value="human"/>
</dbReference>
<dbReference type="GenomeRNAi" id="54951"/>
<dbReference type="Pharos" id="Q9NX08">
    <property type="development level" value="Tdark"/>
</dbReference>
<dbReference type="PRO" id="PR:Q9NX08"/>
<dbReference type="Proteomes" id="UP000005640">
    <property type="component" value="Chromosome 4"/>
</dbReference>
<dbReference type="RNAct" id="Q9NX08">
    <property type="molecule type" value="protein"/>
</dbReference>
<dbReference type="Bgee" id="ENSG00000169019">
    <property type="expression patterns" value="Expressed in choroid plexus epithelium and 197 other cell types or tissues"/>
</dbReference>
<dbReference type="GO" id="GO:0005829">
    <property type="term" value="C:cytosol"/>
    <property type="evidence" value="ECO:0000314"/>
    <property type="project" value="HPA"/>
</dbReference>
<dbReference type="GO" id="GO:0005654">
    <property type="term" value="C:nucleoplasm"/>
    <property type="evidence" value="ECO:0000314"/>
    <property type="project" value="HPA"/>
</dbReference>
<dbReference type="GO" id="GO:0051059">
    <property type="term" value="F:NF-kappaB binding"/>
    <property type="evidence" value="ECO:0000318"/>
    <property type="project" value="GO_Central"/>
</dbReference>
<dbReference type="GO" id="GO:0007165">
    <property type="term" value="P:signal transduction"/>
    <property type="evidence" value="ECO:0000318"/>
    <property type="project" value="GO_Central"/>
</dbReference>
<dbReference type="CDD" id="cd04756">
    <property type="entry name" value="Commd8"/>
    <property type="match status" value="1"/>
</dbReference>
<dbReference type="InterPro" id="IPR017920">
    <property type="entry name" value="COMM"/>
</dbReference>
<dbReference type="InterPro" id="IPR047155">
    <property type="entry name" value="COMMD4/6/7/8"/>
</dbReference>
<dbReference type="InterPro" id="IPR047235">
    <property type="entry name" value="COMMD8"/>
</dbReference>
<dbReference type="InterPro" id="IPR055184">
    <property type="entry name" value="COMMD8_HN"/>
</dbReference>
<dbReference type="PANTHER" id="PTHR16231">
    <property type="entry name" value="COMM DOMAIN-CONTAINING PROTEIN 4-8 FAMILY MEMBER"/>
    <property type="match status" value="1"/>
</dbReference>
<dbReference type="PANTHER" id="PTHR16231:SF0">
    <property type="entry name" value="COMM DOMAIN-CONTAINING PROTEIN 8"/>
    <property type="match status" value="1"/>
</dbReference>
<dbReference type="Pfam" id="PF07258">
    <property type="entry name" value="COMM_domain"/>
    <property type="match status" value="1"/>
</dbReference>
<dbReference type="Pfam" id="PF22838">
    <property type="entry name" value="COMMD8_HN"/>
    <property type="match status" value="1"/>
</dbReference>
<dbReference type="PROSITE" id="PS51269">
    <property type="entry name" value="COMM"/>
    <property type="match status" value="1"/>
</dbReference>
<sequence>MEPEEGTPLWRLQKLPAELGPQLLHKIIDGICGRAYPVYQDYHTVWESEEWMHVLEDIAKFFKAIVGKNLPDEEIFQQLNQLNSLHQETIMKCVKSRKDEIKQALSREIVAISSAQLQDFDWQVKLALSSDKIAALRMPLLSLHLDVKENGEVKPYSIEMSREELQNLIQSLEAANKVVLQLK</sequence>
<protein>
    <recommendedName>
        <fullName>COMM domain-containing protein 8</fullName>
    </recommendedName>
</protein>
<reference key="1">
    <citation type="journal article" date="2005" name="J. Biol. Chem.">
        <title>COMMD proteins, a novel family of structural and functional homologs of MURR1.</title>
        <authorList>
            <person name="Burstein E."/>
            <person name="Hoberg J.E."/>
            <person name="Wilkinson A.S."/>
            <person name="Rumble J.M."/>
            <person name="Csomos R.A."/>
            <person name="Komarck C.M."/>
            <person name="Maine G.N."/>
            <person name="Wilkinson J.C."/>
            <person name="Mayo M.W."/>
            <person name="Duckett C.S."/>
        </authorList>
    </citation>
    <scope>NUCLEOTIDE SEQUENCE [MRNA]</scope>
    <scope>FUNCTION</scope>
    <scope>INTERACTION WITH COMMD1; RELA; RELB AND NFKB1</scope>
    <scope>TISSUE SPECIFICITY</scope>
</reference>
<reference key="2">
    <citation type="submission" date="1999-09" db="EMBL/GenBank/DDBJ databases">
        <title>Novel genes expressed in hematopoietic stem/progenitor cells from myelodysplastic syndrome patients.</title>
        <authorList>
            <person name="Huang C."/>
            <person name="Qian B."/>
            <person name="Tu Y."/>
            <person name="Gu W."/>
            <person name="Wang Y."/>
            <person name="Han Z."/>
            <person name="Chen Z."/>
        </authorList>
    </citation>
    <scope>NUCLEOTIDE SEQUENCE [LARGE SCALE MRNA]</scope>
    <source>
        <tissue>Hematopoietic stem cell</tissue>
    </source>
</reference>
<reference key="3">
    <citation type="journal article" date="2004" name="Nat. Genet.">
        <title>Complete sequencing and characterization of 21,243 full-length human cDNAs.</title>
        <authorList>
            <person name="Ota T."/>
            <person name="Suzuki Y."/>
            <person name="Nishikawa T."/>
            <person name="Otsuki T."/>
            <person name="Sugiyama T."/>
            <person name="Irie R."/>
            <person name="Wakamatsu A."/>
            <person name="Hayashi K."/>
            <person name="Sato H."/>
            <person name="Nagai K."/>
            <person name="Kimura K."/>
            <person name="Makita H."/>
            <person name="Sekine M."/>
            <person name="Obayashi M."/>
            <person name="Nishi T."/>
            <person name="Shibahara T."/>
            <person name="Tanaka T."/>
            <person name="Ishii S."/>
            <person name="Yamamoto J."/>
            <person name="Saito K."/>
            <person name="Kawai Y."/>
            <person name="Isono Y."/>
            <person name="Nakamura Y."/>
            <person name="Nagahari K."/>
            <person name="Murakami K."/>
            <person name="Yasuda T."/>
            <person name="Iwayanagi T."/>
            <person name="Wagatsuma M."/>
            <person name="Shiratori A."/>
            <person name="Sudo H."/>
            <person name="Hosoiri T."/>
            <person name="Kaku Y."/>
            <person name="Kodaira H."/>
            <person name="Kondo H."/>
            <person name="Sugawara M."/>
            <person name="Takahashi M."/>
            <person name="Kanda K."/>
            <person name="Yokoi T."/>
            <person name="Furuya T."/>
            <person name="Kikkawa E."/>
            <person name="Omura Y."/>
            <person name="Abe K."/>
            <person name="Kamihara K."/>
            <person name="Katsuta N."/>
            <person name="Sato K."/>
            <person name="Tanikawa M."/>
            <person name="Yamazaki M."/>
            <person name="Ninomiya K."/>
            <person name="Ishibashi T."/>
            <person name="Yamashita H."/>
            <person name="Murakawa K."/>
            <person name="Fujimori K."/>
            <person name="Tanai H."/>
            <person name="Kimata M."/>
            <person name="Watanabe M."/>
            <person name="Hiraoka S."/>
            <person name="Chiba Y."/>
            <person name="Ishida S."/>
            <person name="Ono Y."/>
            <person name="Takiguchi S."/>
            <person name="Watanabe S."/>
            <person name="Yosida M."/>
            <person name="Hotuta T."/>
            <person name="Kusano J."/>
            <person name="Kanehori K."/>
            <person name="Takahashi-Fujii A."/>
            <person name="Hara H."/>
            <person name="Tanase T.-O."/>
            <person name="Nomura Y."/>
            <person name="Togiya S."/>
            <person name="Komai F."/>
            <person name="Hara R."/>
            <person name="Takeuchi K."/>
            <person name="Arita M."/>
            <person name="Imose N."/>
            <person name="Musashino K."/>
            <person name="Yuuki H."/>
            <person name="Oshima A."/>
            <person name="Sasaki N."/>
            <person name="Aotsuka S."/>
            <person name="Yoshikawa Y."/>
            <person name="Matsunawa H."/>
            <person name="Ichihara T."/>
            <person name="Shiohata N."/>
            <person name="Sano S."/>
            <person name="Moriya S."/>
            <person name="Momiyama H."/>
            <person name="Satoh N."/>
            <person name="Takami S."/>
            <person name="Terashima Y."/>
            <person name="Suzuki O."/>
            <person name="Nakagawa S."/>
            <person name="Senoh A."/>
            <person name="Mizoguchi H."/>
            <person name="Goto Y."/>
            <person name="Shimizu F."/>
            <person name="Wakebe H."/>
            <person name="Hishigaki H."/>
            <person name="Watanabe T."/>
            <person name="Sugiyama A."/>
            <person name="Takemoto M."/>
            <person name="Kawakami B."/>
            <person name="Yamazaki M."/>
            <person name="Watanabe K."/>
            <person name="Kumagai A."/>
            <person name="Itakura S."/>
            <person name="Fukuzumi Y."/>
            <person name="Fujimori Y."/>
            <person name="Komiyama M."/>
            <person name="Tashiro H."/>
            <person name="Tanigami A."/>
            <person name="Fujiwara T."/>
            <person name="Ono T."/>
            <person name="Yamada K."/>
            <person name="Fujii Y."/>
            <person name="Ozaki K."/>
            <person name="Hirao M."/>
            <person name="Ohmori Y."/>
            <person name="Kawabata A."/>
            <person name="Hikiji T."/>
            <person name="Kobatake N."/>
            <person name="Inagaki H."/>
            <person name="Ikema Y."/>
            <person name="Okamoto S."/>
            <person name="Okitani R."/>
            <person name="Kawakami T."/>
            <person name="Noguchi S."/>
            <person name="Itoh T."/>
            <person name="Shigeta K."/>
            <person name="Senba T."/>
            <person name="Matsumura K."/>
            <person name="Nakajima Y."/>
            <person name="Mizuno T."/>
            <person name="Morinaga M."/>
            <person name="Sasaki M."/>
            <person name="Togashi T."/>
            <person name="Oyama M."/>
            <person name="Hata H."/>
            <person name="Watanabe M."/>
            <person name="Komatsu T."/>
            <person name="Mizushima-Sugano J."/>
            <person name="Satoh T."/>
            <person name="Shirai Y."/>
            <person name="Takahashi Y."/>
            <person name="Nakagawa K."/>
            <person name="Okumura K."/>
            <person name="Nagase T."/>
            <person name="Nomura N."/>
            <person name="Kikuchi H."/>
            <person name="Masuho Y."/>
            <person name="Yamashita R."/>
            <person name="Nakai K."/>
            <person name="Yada T."/>
            <person name="Nakamura Y."/>
            <person name="Ohara O."/>
            <person name="Isogai T."/>
            <person name="Sugano S."/>
        </authorList>
    </citation>
    <scope>NUCLEOTIDE SEQUENCE [LARGE SCALE MRNA]</scope>
</reference>
<reference key="4">
    <citation type="journal article" date="2004" name="Genome Res.">
        <title>The status, quality, and expansion of the NIH full-length cDNA project: the Mammalian Gene Collection (MGC).</title>
        <authorList>
            <consortium name="The MGC Project Team"/>
        </authorList>
    </citation>
    <scope>NUCLEOTIDE SEQUENCE [LARGE SCALE MRNA]</scope>
    <source>
        <tissue>Kidney</tissue>
        <tissue>Placenta</tissue>
    </source>
</reference>
<reference key="5">
    <citation type="journal article" date="2011" name="BMC Syst. Biol.">
        <title>Initial characterization of the human central proteome.</title>
        <authorList>
            <person name="Burkard T.R."/>
            <person name="Planyavsky M."/>
            <person name="Kaupe I."/>
            <person name="Breitwieser F.P."/>
            <person name="Buerckstuemmer T."/>
            <person name="Bennett K.L."/>
            <person name="Superti-Furga G."/>
            <person name="Colinge J."/>
        </authorList>
    </citation>
    <scope>IDENTIFICATION BY MASS SPECTROMETRY [LARGE SCALE ANALYSIS]</scope>
</reference>
<reference key="6">
    <citation type="journal article" date="2011" name="J. Biol. Chem.">
        <title>COMMD1 (copper metabolism MURR1 domain-containing protein 1) regulates Cullin RING ligases by preventing CAND1 (Cullin-associated Nedd8-dissociated protein 1) binding.</title>
        <authorList>
            <person name="Mao X."/>
            <person name="Gluck N."/>
            <person name="Chen B."/>
            <person name="Starokadomskyy P."/>
            <person name="Li H."/>
            <person name="Maine G.N."/>
            <person name="Burstein E."/>
        </authorList>
    </citation>
    <scope>FUNCTION</scope>
    <scope>INTERACTION WITH CUL1; CUL2; CUL3; CUL4A; CUL4B AND CUL5</scope>
    <scope>SUBCELLULAR LOCATION</scope>
</reference>
<reference key="7">
    <citation type="journal article" date="2013" name="Am. J. Physiol.">
        <title>Functional interaction of COMMD3 and COMMD9 with the epithelial sodium channel.</title>
        <authorList>
            <person name="Liu Y.F."/>
            <person name="Swart M."/>
            <person name="Ke Y."/>
            <person name="Ly K."/>
            <person name="McDonald F.J."/>
        </authorList>
    </citation>
    <scope>INTERACTION WITH SCNN1B</scope>
</reference>
<reference key="8">
    <citation type="journal article" date="2013" name="J. Clin. Invest.">
        <title>CCDC22 deficiency in humans blunts activation of proinflammatory NF-kappaB signaling.</title>
        <authorList>
            <person name="Starokadomskyy P."/>
            <person name="Gluck N."/>
            <person name="Li H."/>
            <person name="Chen B."/>
            <person name="Wallis M."/>
            <person name="Maine G.N."/>
            <person name="Mao X."/>
            <person name="Zaidi I.W."/>
            <person name="Hein M.Y."/>
            <person name="McDonald F.J."/>
            <person name="Lenzner S."/>
            <person name="Zecha A."/>
            <person name="Ropers H.H."/>
            <person name="Kuss A.W."/>
            <person name="McGaughran J."/>
            <person name="Gecz J."/>
            <person name="Burstein E."/>
        </authorList>
    </citation>
    <scope>INTERACTION WITH CCDC22</scope>
</reference>
<reference key="9">
    <citation type="journal article" date="2015" name="Mol. Biol. Cell">
        <title>COMMD1 is linked to the WASH complex and regulates endosomal trafficking of the copper transporter ATP7A.</title>
        <authorList>
            <person name="Phillips-Krawczak C.A."/>
            <person name="Singla A."/>
            <person name="Starokadomskyy P."/>
            <person name="Deng Z."/>
            <person name="Osborne D.G."/>
            <person name="Li H."/>
            <person name="Dick C.J."/>
            <person name="Gomez T.S."/>
            <person name="Koenecke M."/>
            <person name="Zhang J.S."/>
            <person name="Dai H."/>
            <person name="Sifuentes-Dominguez L.F."/>
            <person name="Geng L.N."/>
            <person name="Kaufmann S.H."/>
            <person name="Hein M.Y."/>
            <person name="Wallis M."/>
            <person name="McGaughran J."/>
            <person name="Gecz J."/>
            <person name="van de Sluis B."/>
            <person name="Billadeau D.D."/>
            <person name="Burstein E."/>
        </authorList>
    </citation>
    <scope>INTERACTION WITH CCDC93</scope>
</reference>
<reference key="10">
    <citation type="journal article" date="2015" name="Proteomics">
        <title>N-terminome analysis of the human mitochondrial proteome.</title>
        <authorList>
            <person name="Vaca Jacome A.S."/>
            <person name="Rabilloud T."/>
            <person name="Schaeffer-Reiss C."/>
            <person name="Rompais M."/>
            <person name="Ayoub D."/>
            <person name="Lane L."/>
            <person name="Bairoch A."/>
            <person name="Van Dorsselaer A."/>
            <person name="Carapito C."/>
        </authorList>
    </citation>
    <scope>IDENTIFICATION BY MASS SPECTROMETRY [LARGE SCALE ANALYSIS]</scope>
</reference>
<reference key="11">
    <citation type="journal article" date="2017" name="Nat. Cell Biol.">
        <title>Retriever is a multiprotein complex for retromer-independent endosomal cargo recycling.</title>
        <authorList>
            <person name="McNally K.E."/>
            <person name="Faulkner R."/>
            <person name="Steinberg F."/>
            <person name="Gallon M."/>
            <person name="Ghai R."/>
            <person name="Pim D."/>
            <person name="Langton P."/>
            <person name="Pearson N."/>
            <person name="Danson C.M."/>
            <person name="Naegele H."/>
            <person name="Morris L.L."/>
            <person name="Singla A."/>
            <person name="Overlee B.L."/>
            <person name="Heesom K.J."/>
            <person name="Sessions R."/>
            <person name="Banks L."/>
            <person name="Collins B.M."/>
            <person name="Berger I."/>
            <person name="Billadeau D.D."/>
            <person name="Burstein E."/>
            <person name="Cullen P.J."/>
        </authorList>
    </citation>
    <scope>INTERACTION WITH CCDC22</scope>
</reference>
<reference evidence="12 13" key="12">
    <citation type="journal article" date="2023" name="Cell">
        <title>Structure of the endosomal commander complex linked to Ritscher-Schinzel syndrome.</title>
        <authorList>
            <person name="Healy M.D."/>
            <person name="McNally K.E."/>
            <person name="Butkovic R."/>
            <person name="Chilton M."/>
            <person name="Kato K."/>
            <person name="Sacharz J."/>
            <person name="McConville C."/>
            <person name="Moody E.R.R."/>
            <person name="Shaw S."/>
            <person name="Planelles-Herrero V.J."/>
            <person name="Yadav S.K.N."/>
            <person name="Ross J."/>
            <person name="Borucu U."/>
            <person name="Palmer C.S."/>
            <person name="Chen K.E."/>
            <person name="Croll T.I."/>
            <person name="Hall R.J."/>
            <person name="Caruana N.J."/>
            <person name="Ghai R."/>
            <person name="Nguyen T.H.D."/>
            <person name="Heesom K.J."/>
            <person name="Saitoh S."/>
            <person name="Berger I."/>
            <person name="Schaffitzel C."/>
            <person name="Williams T.A."/>
            <person name="Stroud D.A."/>
            <person name="Derivery E."/>
            <person name="Collins B.M."/>
            <person name="Cullen P.J."/>
        </authorList>
    </citation>
    <scope>STRUCTURE BY ELECTRON MICROSCOPY (3.12 ANGSTROMS) OF 5-183 OF THE CCC COMPLEX</scope>
    <scope>FUNCTION</scope>
    <scope>SUBUNIT</scope>
</reference>
<reference evidence="14" key="13">
    <citation type="journal article" date="2024" name="Nat. Struct. Mol. Biol.">
        <title>Structure and interactions of the endogenous human commander complex.</title>
        <authorList>
            <person name="Laulumaa S."/>
            <person name="Kumpula E.P."/>
            <person name="Huiskonen J.T."/>
            <person name="Varjosalo M."/>
        </authorList>
    </citation>
    <scope>STRUCTURE BY ELECTRON MICROSCOPY (2.90 ANGSTROMS) OF THE CCC COMPLEX</scope>
    <scope>FUNCTION</scope>
    <scope>SUBUNIT</scope>
</reference>
<accession>Q9NX08</accession>
<accession>Q8WUR4</accession>
<accession>Q9HC15</accession>
<name>COMD8_HUMAN</name>
<organism>
    <name type="scientific">Homo sapiens</name>
    <name type="common">Human</name>
    <dbReference type="NCBI Taxonomy" id="9606"/>
    <lineage>
        <taxon>Eukaryota</taxon>
        <taxon>Metazoa</taxon>
        <taxon>Chordata</taxon>
        <taxon>Craniata</taxon>
        <taxon>Vertebrata</taxon>
        <taxon>Euteleostomi</taxon>
        <taxon>Mammalia</taxon>
        <taxon>Eutheria</taxon>
        <taxon>Euarchontoglires</taxon>
        <taxon>Primates</taxon>
        <taxon>Haplorrhini</taxon>
        <taxon>Catarrhini</taxon>
        <taxon>Hominidae</taxon>
        <taxon>Homo</taxon>
    </lineage>
</organism>
<evidence type="ECO:0000255" key="1">
    <source>
        <dbReference type="PROSITE-ProRule" id="PRU00602"/>
    </source>
</evidence>
<evidence type="ECO:0000269" key="2">
    <source>
    </source>
</evidence>
<evidence type="ECO:0000269" key="3">
    <source>
    </source>
</evidence>
<evidence type="ECO:0000269" key="4">
    <source>
    </source>
</evidence>
<evidence type="ECO:0000269" key="5">
    <source>
    </source>
</evidence>
<evidence type="ECO:0000269" key="6">
    <source>
    </source>
</evidence>
<evidence type="ECO:0000269" key="7">
    <source>
    </source>
</evidence>
<evidence type="ECO:0000269" key="8">
    <source>
    </source>
</evidence>
<evidence type="ECO:0000269" key="9">
    <source>
    </source>
</evidence>
<evidence type="ECO:0000305" key="10"/>
<evidence type="ECO:0000305" key="11">
    <source>
    </source>
</evidence>
<evidence type="ECO:0007744" key="12">
    <source>
        <dbReference type="PDB" id="8F2R"/>
    </source>
</evidence>
<evidence type="ECO:0007744" key="13">
    <source>
        <dbReference type="PDB" id="8F2U"/>
    </source>
</evidence>
<evidence type="ECO:0007744" key="14">
    <source>
        <dbReference type="PDB" id="8P0W"/>
    </source>
</evidence>
<evidence type="ECO:0007829" key="15">
    <source>
        <dbReference type="PDB" id="8P0W"/>
    </source>
</evidence>
<proteinExistence type="evidence at protein level"/>